<evidence type="ECO:0000255" key="1">
    <source>
        <dbReference type="PROSITE-ProRule" id="PRU00303"/>
    </source>
</evidence>
<organism>
    <name type="scientific">Helicobacter pylori (strain ATCC 700392 / 26695)</name>
    <name type="common">Campylobacter pylori</name>
    <dbReference type="NCBI Taxonomy" id="85962"/>
    <lineage>
        <taxon>Bacteria</taxon>
        <taxon>Pseudomonadati</taxon>
        <taxon>Campylobacterota</taxon>
        <taxon>Epsilonproteobacteria</taxon>
        <taxon>Campylobacterales</taxon>
        <taxon>Helicobacteraceae</taxon>
        <taxon>Helicobacter</taxon>
    </lineage>
</organism>
<accession>P64655</accession>
<accession>O24948</accession>
<reference key="1">
    <citation type="journal article" date="1997" name="Nature">
        <title>The complete genome sequence of the gastric pathogen Helicobacter pylori.</title>
        <authorList>
            <person name="Tomb J.-F."/>
            <person name="White O."/>
            <person name="Kerlavage A.R."/>
            <person name="Clayton R.A."/>
            <person name="Sutton G.G."/>
            <person name="Fleischmann R.D."/>
            <person name="Ketchum K.A."/>
            <person name="Klenk H.-P."/>
            <person name="Gill S.R."/>
            <person name="Dougherty B.A."/>
            <person name="Nelson K.E."/>
            <person name="Quackenbush J."/>
            <person name="Zhou L."/>
            <person name="Kirkness E.F."/>
            <person name="Peterson S.N."/>
            <person name="Loftus B.J."/>
            <person name="Richardson D.L."/>
            <person name="Dodson R.J."/>
            <person name="Khalak H.G."/>
            <person name="Glodek A."/>
            <person name="McKenney K."/>
            <person name="FitzGerald L.M."/>
            <person name="Lee N."/>
            <person name="Adams M.D."/>
            <person name="Hickey E.K."/>
            <person name="Berg D.E."/>
            <person name="Gocayne J.D."/>
            <person name="Utterback T.R."/>
            <person name="Peterson J.D."/>
            <person name="Kelley J.M."/>
            <person name="Cotton M.D."/>
            <person name="Weidman J.F."/>
            <person name="Fujii C."/>
            <person name="Bowman C."/>
            <person name="Watthey L."/>
            <person name="Wallin E."/>
            <person name="Hayes W.S."/>
            <person name="Borodovsky M."/>
            <person name="Karp P.D."/>
            <person name="Smith H.O."/>
            <person name="Fraser C.M."/>
            <person name="Venter J.C."/>
        </authorList>
    </citation>
    <scope>NUCLEOTIDE SEQUENCE [LARGE SCALE GENOMIC DNA]</scope>
    <source>
        <strain>ATCC 700392 / 26695</strain>
    </source>
</reference>
<sequence length="44" mass="5023">MRISLLAVILALLFVACHETKKQILQNEADSTPSEKTIWQPEQK</sequence>
<keyword id="KW-1185">Reference proteome</keyword>
<keyword id="KW-0732">Signal</keyword>
<dbReference type="EMBL" id="AE000511">
    <property type="protein sequence ID" value="AAD07212.1"/>
    <property type="molecule type" value="Genomic_DNA"/>
</dbReference>
<dbReference type="PIR" id="G64536">
    <property type="entry name" value="G64536"/>
</dbReference>
<dbReference type="RefSeq" id="NP_206935.1">
    <property type="nucleotide sequence ID" value="NC_000915.1"/>
</dbReference>
<dbReference type="RefSeq" id="WP_001222899.1">
    <property type="nucleotide sequence ID" value="NC_018939.1"/>
</dbReference>
<dbReference type="PaxDb" id="85962-C694_00665"/>
<dbReference type="EnsemblBacteria" id="AAD07212">
    <property type="protein sequence ID" value="AAD07212"/>
    <property type="gene ID" value="HP_0135"/>
</dbReference>
<dbReference type="KEGG" id="heo:C694_00665"/>
<dbReference type="KEGG" id="hpy:HP_0135"/>
<dbReference type="PATRIC" id="fig|85962.47.peg.146"/>
<dbReference type="InParanoid" id="P64655"/>
<dbReference type="Proteomes" id="UP000000429">
    <property type="component" value="Chromosome"/>
</dbReference>
<dbReference type="PROSITE" id="PS51257">
    <property type="entry name" value="PROKAR_LIPOPROTEIN"/>
    <property type="match status" value="1"/>
</dbReference>
<proteinExistence type="inferred from homology"/>
<protein>
    <recommendedName>
        <fullName>Uncharacterized protein HP_0135</fullName>
    </recommendedName>
</protein>
<name>Y135_HELPY</name>
<gene>
    <name type="ordered locus">HP_0135</name>
</gene>
<feature type="signal peptide" evidence="1">
    <location>
        <begin position="1"/>
        <end position="16"/>
    </location>
</feature>
<feature type="chain" id="PRO_0000013980" description="Uncharacterized protein HP_0135">
    <location>
        <begin position="17"/>
        <end position="44"/>
    </location>
</feature>